<proteinExistence type="uncertain"/>
<feature type="chain" id="PRO_0000202446" description="Putative uncharacterized protein YBL083C">
    <location>
        <begin position="1"/>
        <end position="141"/>
    </location>
</feature>
<evidence type="ECO:0000305" key="1"/>
<evidence type="ECO:0000305" key="2">
    <source>
    </source>
</evidence>
<sequence length="141" mass="16159">MVFPVPSAEEKCSAQCQSRQDYSIRSNRIQLHRRPIFKVPPLPVSILVSLDFAYTDLLVGNALLRWSHLVRLARVVLEFLSTKLTSKHAIVGIEYCSVASIGLDAAIWFGRPRQKPSSYHQLYGKKAQLKQMYKYHIIVLF</sequence>
<dbReference type="EMBL" id="X79489">
    <property type="protein sequence ID" value="CAA56023.1"/>
    <property type="molecule type" value="Genomic_DNA"/>
</dbReference>
<dbReference type="EMBL" id="Z35844">
    <property type="protein sequence ID" value="CAA84903.1"/>
    <property type="molecule type" value="Genomic_DNA"/>
</dbReference>
<dbReference type="PIR" id="S45423">
    <property type="entry name" value="S45423"/>
</dbReference>
<dbReference type="STRING" id="4932.YBL083C"/>
<dbReference type="PaxDb" id="4932-YBL083C"/>
<dbReference type="EnsemblFungi" id="YBL083C_mRNA">
    <property type="protein sequence ID" value="YBL083C"/>
    <property type="gene ID" value="YBL083C"/>
</dbReference>
<dbReference type="AGR" id="SGD:S000000179"/>
<dbReference type="SGD" id="S000000179">
    <property type="gene designation" value="YBL083C"/>
</dbReference>
<dbReference type="HOGENOM" id="CLU_1826821_0_0_1"/>
<reference key="1">
    <citation type="journal article" date="1995" name="Yeast">
        <title>Sequence analysis of a 78.6 kb segment of the left end of Saccharomyces cerevisiae chromosome II.</title>
        <authorList>
            <person name="Obermaier B."/>
            <person name="Gassenhuber J."/>
            <person name="Piravandi E."/>
            <person name="Domdey H."/>
        </authorList>
    </citation>
    <scope>NUCLEOTIDE SEQUENCE [GENOMIC DNA]</scope>
    <source>
        <strain>ATCC 204508 / S288c</strain>
    </source>
</reference>
<reference key="2">
    <citation type="journal article" date="1994" name="EMBO J.">
        <title>Complete DNA sequence of yeast chromosome II.</title>
        <authorList>
            <person name="Feldmann H."/>
            <person name="Aigle M."/>
            <person name="Aljinovic G."/>
            <person name="Andre B."/>
            <person name="Baclet M.C."/>
            <person name="Barthe C."/>
            <person name="Baur A."/>
            <person name="Becam A.-M."/>
            <person name="Biteau N."/>
            <person name="Boles E."/>
            <person name="Brandt T."/>
            <person name="Brendel M."/>
            <person name="Brueckner M."/>
            <person name="Bussereau F."/>
            <person name="Christiansen C."/>
            <person name="Contreras R."/>
            <person name="Crouzet M."/>
            <person name="Cziepluch C."/>
            <person name="Demolis N."/>
            <person name="Delaveau T."/>
            <person name="Doignon F."/>
            <person name="Domdey H."/>
            <person name="Duesterhus S."/>
            <person name="Dubois E."/>
            <person name="Dujon B."/>
            <person name="El Bakkoury M."/>
            <person name="Entian K.-D."/>
            <person name="Feuermann M."/>
            <person name="Fiers W."/>
            <person name="Fobo G.M."/>
            <person name="Fritz C."/>
            <person name="Gassenhuber J."/>
            <person name="Glansdorff N."/>
            <person name="Goffeau A."/>
            <person name="Grivell L.A."/>
            <person name="de Haan M."/>
            <person name="Hein C."/>
            <person name="Herbert C.J."/>
            <person name="Hollenberg C.P."/>
            <person name="Holmstroem K."/>
            <person name="Jacq C."/>
            <person name="Jacquet M."/>
            <person name="Jauniaux J.-C."/>
            <person name="Jonniaux J.-L."/>
            <person name="Kallesoee T."/>
            <person name="Kiesau P."/>
            <person name="Kirchrath L."/>
            <person name="Koetter P."/>
            <person name="Korol S."/>
            <person name="Liebl S."/>
            <person name="Logghe M."/>
            <person name="Lohan A.J.E."/>
            <person name="Louis E.J."/>
            <person name="Li Z.Y."/>
            <person name="Maat M.J."/>
            <person name="Mallet L."/>
            <person name="Mannhaupt G."/>
            <person name="Messenguy F."/>
            <person name="Miosga T."/>
            <person name="Molemans F."/>
            <person name="Mueller S."/>
            <person name="Nasr F."/>
            <person name="Obermaier B."/>
            <person name="Perea J."/>
            <person name="Pierard A."/>
            <person name="Piravandi E."/>
            <person name="Pohl F.M."/>
            <person name="Pohl T.M."/>
            <person name="Potier S."/>
            <person name="Proft M."/>
            <person name="Purnelle B."/>
            <person name="Ramezani Rad M."/>
            <person name="Rieger M."/>
            <person name="Rose M."/>
            <person name="Schaaff-Gerstenschlaeger I."/>
            <person name="Scherens B."/>
            <person name="Schwarzlose C."/>
            <person name="Skala J."/>
            <person name="Slonimski P.P."/>
            <person name="Smits P.H.M."/>
            <person name="Souciet J.-L."/>
            <person name="Steensma H.Y."/>
            <person name="Stucka R."/>
            <person name="Urrestarazu L.A."/>
            <person name="van der Aart Q.J.M."/>
            <person name="Van Dyck L."/>
            <person name="Vassarotti A."/>
            <person name="Vetter I."/>
            <person name="Vierendeels F."/>
            <person name="Vissers S."/>
            <person name="Wagner G."/>
            <person name="de Wergifosse P."/>
            <person name="Wolfe K.H."/>
            <person name="Zagulski M."/>
            <person name="Zimmermann F.K."/>
            <person name="Mewes H.-W."/>
            <person name="Kleine K."/>
        </authorList>
    </citation>
    <scope>NUCLEOTIDE SEQUENCE [LARGE SCALE GENOMIC DNA]</scope>
    <source>
        <strain>ATCC 204508 / S288c</strain>
    </source>
</reference>
<reference key="3">
    <citation type="journal article" date="2014" name="G3 (Bethesda)">
        <title>The reference genome sequence of Saccharomyces cerevisiae: Then and now.</title>
        <authorList>
            <person name="Engel S.R."/>
            <person name="Dietrich F.S."/>
            <person name="Fisk D.G."/>
            <person name="Binkley G."/>
            <person name="Balakrishnan R."/>
            <person name="Costanzo M.C."/>
            <person name="Dwight S.S."/>
            <person name="Hitz B.C."/>
            <person name="Karra K."/>
            <person name="Nash R.S."/>
            <person name="Weng S."/>
            <person name="Wong E.D."/>
            <person name="Lloyd P."/>
            <person name="Skrzypek M.S."/>
            <person name="Miyasato S.R."/>
            <person name="Simison M."/>
            <person name="Cherry J.M."/>
        </authorList>
    </citation>
    <scope>GENOME REANNOTATION</scope>
    <source>
        <strain>ATCC 204508 / S288c</strain>
    </source>
</reference>
<protein>
    <recommendedName>
        <fullName>Putative uncharacterized protein YBL083C</fullName>
    </recommendedName>
</protein>
<gene>
    <name type="ordered locus">YBL083C</name>
    <name type="ORF">YBL0719</name>
</gene>
<organism>
    <name type="scientific">Saccharomyces cerevisiae (strain ATCC 204508 / S288c)</name>
    <name type="common">Baker's yeast</name>
    <dbReference type="NCBI Taxonomy" id="559292"/>
    <lineage>
        <taxon>Eukaryota</taxon>
        <taxon>Fungi</taxon>
        <taxon>Dikarya</taxon>
        <taxon>Ascomycota</taxon>
        <taxon>Saccharomycotina</taxon>
        <taxon>Saccharomycetes</taxon>
        <taxon>Saccharomycetales</taxon>
        <taxon>Saccharomycetaceae</taxon>
        <taxon>Saccharomyces</taxon>
    </lineage>
</organism>
<comment type="miscellaneous">
    <text evidence="1">Almost completely overlaps ALG3.</text>
</comment>
<comment type="caution">
    <text evidence="2">Product of a dubious gene prediction unlikely to encode a functional protein. Because of that it is not part of the S.cerevisiae S288c complete/reference proteome set.</text>
</comment>
<accession>P38178</accession>
<name>YBI3_YEAST</name>